<sequence length="505" mass="58781">MITNDLIAQHSLTLTIASSVLLVFLLSRLLRKDATGKAQGCRPVAKRWQWDPILGLDIVLAQIGALKGNYYLPWLIELHSNMPKTFEINFFGKRQIYTSEPDNLKAMTATNFHDFGIEPMRRHTKGSMPFADKGISTVDGKEWEFSRFLLKPFFYREVYTSTDRIEPFADHMMALIPGDGESFNMQSLIQRWFLDLTTNFIFGKPMDALENPDRARITWAMLDVLKGGRLRAQFYMMMWAFNWTWWYKAVAEVHDFINVHIRETYKEIEEREQRIKDGKPVEPERTDLIWYMAWNLRDEELLRSQLCLVFVPNNDTTSIFISNCIWHLARHPEAWEKLRQEVLAHGDAPLTFEALRNMKYLQCVLNETHRLTPNNVTQIRVCLNDSVLPVGGGKNAKEPFFVRKGDVVSITKTVMYRDPEIWGNDAEEFKPERFDGRRVFWEFLPFGGGPRRCPAQMMVQTEAAYMLARLARVYRRIEARDPAPYTAVMRIGPSNKTGVQIAVYK</sequence>
<gene>
    <name evidence="4" type="primary">iliC</name>
</gene>
<organism>
    <name type="scientific">Neonectria sp. (strain DH2)</name>
    <dbReference type="NCBI Taxonomy" id="1735992"/>
    <lineage>
        <taxon>Eukaryota</taxon>
        <taxon>Fungi</taxon>
        <taxon>Dikarya</taxon>
        <taxon>Ascomycota</taxon>
        <taxon>Pezizomycotina</taxon>
        <taxon>Sordariomycetes</taxon>
        <taxon>Hypocreomycetidae</taxon>
        <taxon>Hypocreales</taxon>
        <taxon>Nectriaceae</taxon>
        <taxon>Neonectria</taxon>
    </lineage>
</organism>
<protein>
    <recommendedName>
        <fullName evidence="4">Cytochrome P450 monooxygenase iliC</fullName>
        <ecNumber evidence="3">1.-.-.-</ecNumber>
    </recommendedName>
    <alternativeName>
        <fullName evidence="4">Ilicicolin H biosynthesis cluster protein C</fullName>
    </alternativeName>
</protein>
<name>ILIC_NEOS2</name>
<reference key="1">
    <citation type="journal article" date="2019" name="Molecules">
        <title>Heterologous expression of ilicicolin H biosynthetic gene cluster and production of a new potent antifungal reagent, ilicicolin J.</title>
        <authorList>
            <person name="Lin X."/>
            <person name="Yuan S."/>
            <person name="Chen S."/>
            <person name="Chen B."/>
            <person name="Xu H."/>
            <person name="Liu L."/>
            <person name="Li H."/>
            <person name="Gao Z."/>
        </authorList>
    </citation>
    <scope>NUCLEOTIDE SEQUENCE [LARGE SCALE GENOMIC DNA]</scope>
    <scope>FUNCTION</scope>
    <scope>CATALYTIC ACTIVITY</scope>
    <scope>PATHWAY</scope>
</reference>
<keyword id="KW-0349">Heme</keyword>
<keyword id="KW-0408">Iron</keyword>
<keyword id="KW-0472">Membrane</keyword>
<keyword id="KW-0479">Metal-binding</keyword>
<keyword id="KW-0503">Monooxygenase</keyword>
<keyword id="KW-0560">Oxidoreductase</keyword>
<keyword id="KW-0812">Transmembrane</keyword>
<keyword id="KW-1133">Transmembrane helix</keyword>
<comment type="function">
    <text evidence="3 6">Cytochrome P450 monooxygenase; part of the gene cluster that mediates the biosynthesis of ilicicolin H, a 4-hydroxy-2-pyridonealkaloid that has potent and broad antifungal activities by inhibiting the mitochondrial respiration chain (PubMed:31216742). IliC catalyzes the ring expansion of the tetramate intermediate to the acyclic 2-pyridone intermediate that contains the trans bis-diene chain (PubMed:31216742). The biosynthesis of ilicicolin H starts with formation of the tetramic acid by the hybrid PKS-NRPS synthetase iliA with the partnering trans-enoyl reductase iliB since iliA lacks a designated enoylreductase (ER) domain. The cytochrome P450 monooxygenase iliC then catalyzes the ring expansion of the tetramate to the acyclic 2-pyridone. The pericyclase iliD further converts the acyclic 2-pyridone into 8-epi-ilicicolin H. 8-epi-ilicicolin H might then spontaneously convert to ilicicolin H since ilicicolin H is produced in the absence of the epimerase iliE, in contrast to what was observed for the Talaromyces variabilis ilicolin H biosynthetic pathway (Probable) (PubMed:31216742).</text>
</comment>
<comment type="catalytic activity">
    <reaction evidence="3">
        <text>(3E,5S)-3-[(2E,4E,8S,10E,12Z)-1-hydroxy-4,8-dimethyltetradeca-2,4,10,12-tetraen-1-ylidene]-5-[(4-hydroxyphenyl)methyl]pyrrolidine-2,4-dione + reduced [NADPH--hemoprotein reductase] + O2 = 3-[(2E,4E,8S,10E,12Z)-4,8-dimethyltetradeca-2,4,10,12-tetraenoyl]-4-hydroxy-5-(4-hydroxyphenyl)-1,2-dihydropyridin-2-one + oxidized [NADPH--hemoprotein reductase] + 2 H2O</text>
        <dbReference type="Rhea" id="RHEA:64552"/>
        <dbReference type="Rhea" id="RHEA-COMP:11964"/>
        <dbReference type="Rhea" id="RHEA-COMP:11965"/>
        <dbReference type="ChEBI" id="CHEBI:15377"/>
        <dbReference type="ChEBI" id="CHEBI:15379"/>
        <dbReference type="ChEBI" id="CHEBI:57618"/>
        <dbReference type="ChEBI" id="CHEBI:58210"/>
        <dbReference type="ChEBI" id="CHEBI:155889"/>
        <dbReference type="ChEBI" id="CHEBI:155890"/>
    </reaction>
    <physiologicalReaction direction="left-to-right" evidence="3">
        <dbReference type="Rhea" id="RHEA:64553"/>
    </physiologicalReaction>
</comment>
<comment type="cofactor">
    <cofactor evidence="1">
        <name>heme</name>
        <dbReference type="ChEBI" id="CHEBI:30413"/>
    </cofactor>
</comment>
<comment type="pathway">
    <text evidence="3">Mycotoxin biosynthesis.</text>
</comment>
<comment type="subcellular location">
    <subcellularLocation>
        <location evidence="2">Membrane</location>
        <topology evidence="2">Single-pass membrane protein</topology>
    </subcellularLocation>
</comment>
<comment type="similarity">
    <text evidence="5">Belongs to the cytochrome P450 family.</text>
</comment>
<proteinExistence type="evidence at protein level"/>
<evidence type="ECO:0000250" key="1">
    <source>
        <dbReference type="UniProtKB" id="P04798"/>
    </source>
</evidence>
<evidence type="ECO:0000255" key="2"/>
<evidence type="ECO:0000269" key="3">
    <source>
    </source>
</evidence>
<evidence type="ECO:0000303" key="4">
    <source>
    </source>
</evidence>
<evidence type="ECO:0000305" key="5"/>
<evidence type="ECO:0000305" key="6">
    <source>
    </source>
</evidence>
<feature type="chain" id="PRO_0000453069" description="Cytochrome P450 monooxygenase iliC">
    <location>
        <begin position="1"/>
        <end position="505"/>
    </location>
</feature>
<feature type="transmembrane region" description="Helical" evidence="2">
    <location>
        <begin position="6"/>
        <end position="26"/>
    </location>
</feature>
<feature type="binding site" description="axial binding residue" evidence="1">
    <location>
        <position position="453"/>
    </location>
    <ligand>
        <name>heme</name>
        <dbReference type="ChEBI" id="CHEBI:30413"/>
    </ligand>
    <ligandPart>
        <name>Fe</name>
        <dbReference type="ChEBI" id="CHEBI:18248"/>
    </ligandPart>
</feature>
<dbReference type="EC" id="1.-.-.-" evidence="3"/>
<dbReference type="SMR" id="P0DO32"/>
<dbReference type="GO" id="GO:0016020">
    <property type="term" value="C:membrane"/>
    <property type="evidence" value="ECO:0007669"/>
    <property type="project" value="UniProtKB-SubCell"/>
</dbReference>
<dbReference type="GO" id="GO:0020037">
    <property type="term" value="F:heme binding"/>
    <property type="evidence" value="ECO:0007669"/>
    <property type="project" value="InterPro"/>
</dbReference>
<dbReference type="GO" id="GO:0005506">
    <property type="term" value="F:iron ion binding"/>
    <property type="evidence" value="ECO:0007669"/>
    <property type="project" value="InterPro"/>
</dbReference>
<dbReference type="GO" id="GO:0016491">
    <property type="term" value="F:oxidoreductase activity"/>
    <property type="evidence" value="ECO:0000314"/>
    <property type="project" value="UniProt"/>
</dbReference>
<dbReference type="GO" id="GO:0016712">
    <property type="term" value="F:oxidoreductase activity, acting on paired donors, with incorporation or reduction of molecular oxygen, reduced flavin or flavoprotein as one donor, and incorporation of one atom of oxygen"/>
    <property type="evidence" value="ECO:0007669"/>
    <property type="project" value="InterPro"/>
</dbReference>
<dbReference type="GO" id="GO:0016218">
    <property type="term" value="F:polyketide synthase activity"/>
    <property type="evidence" value="ECO:0000314"/>
    <property type="project" value="UniProt"/>
</dbReference>
<dbReference type="GO" id="GO:0140781">
    <property type="term" value="P:ilicicolin H biosynthetic process"/>
    <property type="evidence" value="ECO:0000314"/>
    <property type="project" value="GO_Central"/>
</dbReference>
<dbReference type="CDD" id="cd11063">
    <property type="entry name" value="CYP52"/>
    <property type="match status" value="1"/>
</dbReference>
<dbReference type="Gene3D" id="1.10.630.10">
    <property type="entry name" value="Cytochrome P450"/>
    <property type="match status" value="1"/>
</dbReference>
<dbReference type="InterPro" id="IPR001128">
    <property type="entry name" value="Cyt_P450"/>
</dbReference>
<dbReference type="InterPro" id="IPR017972">
    <property type="entry name" value="Cyt_P450_CS"/>
</dbReference>
<dbReference type="InterPro" id="IPR002974">
    <property type="entry name" value="Cyt_P450_E_CYP52_ascomycetes"/>
</dbReference>
<dbReference type="InterPro" id="IPR047146">
    <property type="entry name" value="Cyt_P450_E_CYP52_fungi"/>
</dbReference>
<dbReference type="InterPro" id="IPR036396">
    <property type="entry name" value="Cyt_P450_sf"/>
</dbReference>
<dbReference type="PANTHER" id="PTHR24287:SF18">
    <property type="entry name" value="CYTOCHROME P450 MONOOXYGENASE APDE-RELATED"/>
    <property type="match status" value="1"/>
</dbReference>
<dbReference type="PANTHER" id="PTHR24287">
    <property type="entry name" value="P450, PUTATIVE (EUROFUNG)-RELATED"/>
    <property type="match status" value="1"/>
</dbReference>
<dbReference type="Pfam" id="PF00067">
    <property type="entry name" value="p450"/>
    <property type="match status" value="1"/>
</dbReference>
<dbReference type="PRINTS" id="PR01239">
    <property type="entry name" value="EP450IICYP52"/>
</dbReference>
<dbReference type="SUPFAM" id="SSF48264">
    <property type="entry name" value="Cytochrome P450"/>
    <property type="match status" value="1"/>
</dbReference>
<dbReference type="PROSITE" id="PS00086">
    <property type="entry name" value="CYTOCHROME_P450"/>
    <property type="match status" value="1"/>
</dbReference>
<accession>P0DO32</accession>